<gene>
    <name type="ordered locus">xcc-b100_0940</name>
</gene>
<evidence type="ECO:0000255" key="1">
    <source>
        <dbReference type="HAMAP-Rule" id="MF_00694"/>
    </source>
</evidence>
<protein>
    <recommendedName>
        <fullName evidence="1">Probable 5-dehydro-4-deoxyglucarate dehydratase</fullName>
        <ecNumber evidence="1">4.2.1.41</ecNumber>
    </recommendedName>
    <alternativeName>
        <fullName evidence="1">5-keto-4-deoxy-glucarate dehydratase</fullName>
        <shortName evidence="1">KDGDH</shortName>
    </alternativeName>
</protein>
<keyword id="KW-0456">Lyase</keyword>
<sequence length="305" mass="32936">MSSRYTPSEMAQALGAGLLSFPVTHFDADMAFDEPAYRSNLDWLSSHPAAGLFAAGGTGELFSLTLDEVDRAVRAAVTQTAGRMPVIAPAGYGTAIAVAMAQAAERNDADGILLFPPYLTECDADGVAEHVERVCKATSLGVIVYGRANARLDDVALARVAERCPNLVGYKDGIGDVERMTRIYARLGDRLLYVGGLPTAETFALPYLEMGVTTYSSAIFNFLPEWALSFYAAVRARDHATIYRELNDFVLPYTVLRNRRAGYAVSIVKAGMRAVGRPAGPVRTPLADLTEDEFAQLTQLIGGRR</sequence>
<name>KDGD_XANCB</name>
<organism>
    <name type="scientific">Xanthomonas campestris pv. campestris (strain B100)</name>
    <dbReference type="NCBI Taxonomy" id="509169"/>
    <lineage>
        <taxon>Bacteria</taxon>
        <taxon>Pseudomonadati</taxon>
        <taxon>Pseudomonadota</taxon>
        <taxon>Gammaproteobacteria</taxon>
        <taxon>Lysobacterales</taxon>
        <taxon>Lysobacteraceae</taxon>
        <taxon>Xanthomonas</taxon>
    </lineage>
</organism>
<dbReference type="EC" id="4.2.1.41" evidence="1"/>
<dbReference type="EMBL" id="AM920689">
    <property type="protein sequence ID" value="CAP50288.1"/>
    <property type="molecule type" value="Genomic_DNA"/>
</dbReference>
<dbReference type="SMR" id="B0RPA3"/>
<dbReference type="KEGG" id="xca:xcc-b100_0940"/>
<dbReference type="HOGENOM" id="CLU_049343_5_2_6"/>
<dbReference type="UniPathway" id="UPA00564">
    <property type="reaction ID" value="UER00628"/>
</dbReference>
<dbReference type="Proteomes" id="UP000001188">
    <property type="component" value="Chromosome"/>
</dbReference>
<dbReference type="GO" id="GO:0008840">
    <property type="term" value="F:4-hydroxy-tetrahydrodipicolinate synthase activity"/>
    <property type="evidence" value="ECO:0007669"/>
    <property type="project" value="TreeGrafter"/>
</dbReference>
<dbReference type="GO" id="GO:0047448">
    <property type="term" value="F:5-dehydro-4-deoxyglucarate dehydratase activity"/>
    <property type="evidence" value="ECO:0007669"/>
    <property type="project" value="UniProtKB-UniRule"/>
</dbReference>
<dbReference type="GO" id="GO:0042838">
    <property type="term" value="P:D-glucarate catabolic process"/>
    <property type="evidence" value="ECO:0007669"/>
    <property type="project" value="UniProtKB-UniRule"/>
</dbReference>
<dbReference type="CDD" id="cd00951">
    <property type="entry name" value="KDGDH"/>
    <property type="match status" value="1"/>
</dbReference>
<dbReference type="Gene3D" id="3.20.20.70">
    <property type="entry name" value="Aldolase class I"/>
    <property type="match status" value="1"/>
</dbReference>
<dbReference type="HAMAP" id="MF_00694">
    <property type="entry name" value="KDGDH"/>
    <property type="match status" value="1"/>
</dbReference>
<dbReference type="InterPro" id="IPR013785">
    <property type="entry name" value="Aldolase_TIM"/>
</dbReference>
<dbReference type="InterPro" id="IPR002220">
    <property type="entry name" value="DapA-like"/>
</dbReference>
<dbReference type="InterPro" id="IPR017655">
    <property type="entry name" value="Dehydro-deoxyglucarate_dehyd"/>
</dbReference>
<dbReference type="NCBIfam" id="TIGR03249">
    <property type="entry name" value="KdgD"/>
    <property type="match status" value="1"/>
</dbReference>
<dbReference type="NCBIfam" id="NF002958">
    <property type="entry name" value="PRK03620.1"/>
    <property type="match status" value="1"/>
</dbReference>
<dbReference type="PANTHER" id="PTHR12128:SF19">
    <property type="entry name" value="5-DEHYDRO-4-DEOXYGLUCARATE DEHYDRATASE 2-RELATED"/>
    <property type="match status" value="1"/>
</dbReference>
<dbReference type="PANTHER" id="PTHR12128">
    <property type="entry name" value="DIHYDRODIPICOLINATE SYNTHASE"/>
    <property type="match status" value="1"/>
</dbReference>
<dbReference type="Pfam" id="PF00701">
    <property type="entry name" value="DHDPS"/>
    <property type="match status" value="1"/>
</dbReference>
<dbReference type="PIRSF" id="PIRSF001365">
    <property type="entry name" value="DHDPS"/>
    <property type="match status" value="1"/>
</dbReference>
<dbReference type="SMART" id="SM01130">
    <property type="entry name" value="DHDPS"/>
    <property type="match status" value="1"/>
</dbReference>
<dbReference type="SUPFAM" id="SSF51569">
    <property type="entry name" value="Aldolase"/>
    <property type="match status" value="1"/>
</dbReference>
<comment type="catalytic activity">
    <reaction evidence="1">
        <text>5-dehydro-4-deoxy-D-glucarate + H(+) = 2,5-dioxopentanoate + CO2 + H2O</text>
        <dbReference type="Rhea" id="RHEA:24608"/>
        <dbReference type="ChEBI" id="CHEBI:15377"/>
        <dbReference type="ChEBI" id="CHEBI:15378"/>
        <dbReference type="ChEBI" id="CHEBI:16526"/>
        <dbReference type="ChEBI" id="CHEBI:42819"/>
        <dbReference type="ChEBI" id="CHEBI:58136"/>
        <dbReference type="EC" id="4.2.1.41"/>
    </reaction>
</comment>
<comment type="pathway">
    <text evidence="1">Carbohydrate acid metabolism; D-glucarate degradation; 2,5-dioxopentanoate from D-glucarate: step 2/2.</text>
</comment>
<comment type="similarity">
    <text evidence="1">Belongs to the DapA family.</text>
</comment>
<accession>B0RPA3</accession>
<reference key="1">
    <citation type="journal article" date="2008" name="J. Biotechnol.">
        <title>The genome of Xanthomonas campestris pv. campestris B100 and its use for the reconstruction of metabolic pathways involved in xanthan biosynthesis.</title>
        <authorList>
            <person name="Vorhoelter F.-J."/>
            <person name="Schneiker S."/>
            <person name="Goesmann A."/>
            <person name="Krause L."/>
            <person name="Bekel T."/>
            <person name="Kaiser O."/>
            <person name="Linke B."/>
            <person name="Patschkowski T."/>
            <person name="Rueckert C."/>
            <person name="Schmid J."/>
            <person name="Sidhu V.K."/>
            <person name="Sieber V."/>
            <person name="Tauch A."/>
            <person name="Watt S.A."/>
            <person name="Weisshaar B."/>
            <person name="Becker A."/>
            <person name="Niehaus K."/>
            <person name="Puehler A."/>
        </authorList>
    </citation>
    <scope>NUCLEOTIDE SEQUENCE [LARGE SCALE GENOMIC DNA]</scope>
    <source>
        <strain>B100</strain>
    </source>
</reference>
<proteinExistence type="inferred from homology"/>
<feature type="chain" id="PRO_1000132275" description="Probable 5-dehydro-4-deoxyglucarate dehydratase">
    <location>
        <begin position="1"/>
        <end position="305"/>
    </location>
</feature>